<gene>
    <name evidence="1" type="primary">dxr</name>
    <name type="ordered locus">CJA_1118</name>
</gene>
<dbReference type="EC" id="1.1.1.267" evidence="1"/>
<dbReference type="EMBL" id="CP000934">
    <property type="protein sequence ID" value="ACE83865.1"/>
    <property type="molecule type" value="Genomic_DNA"/>
</dbReference>
<dbReference type="RefSeq" id="WP_012486766.1">
    <property type="nucleotide sequence ID" value="NC_010995.1"/>
</dbReference>
<dbReference type="SMR" id="B3PBQ4"/>
<dbReference type="STRING" id="498211.CJA_1118"/>
<dbReference type="KEGG" id="cja:CJA_1118"/>
<dbReference type="eggNOG" id="COG0743">
    <property type="taxonomic scope" value="Bacteria"/>
</dbReference>
<dbReference type="HOGENOM" id="CLU_035714_4_0_6"/>
<dbReference type="OrthoDB" id="9806546at2"/>
<dbReference type="UniPathway" id="UPA00056">
    <property type="reaction ID" value="UER00092"/>
</dbReference>
<dbReference type="Proteomes" id="UP000001036">
    <property type="component" value="Chromosome"/>
</dbReference>
<dbReference type="GO" id="GO:0030604">
    <property type="term" value="F:1-deoxy-D-xylulose-5-phosphate reductoisomerase activity"/>
    <property type="evidence" value="ECO:0007669"/>
    <property type="project" value="UniProtKB-UniRule"/>
</dbReference>
<dbReference type="GO" id="GO:0030145">
    <property type="term" value="F:manganese ion binding"/>
    <property type="evidence" value="ECO:0007669"/>
    <property type="project" value="TreeGrafter"/>
</dbReference>
<dbReference type="GO" id="GO:0070402">
    <property type="term" value="F:NADPH binding"/>
    <property type="evidence" value="ECO:0007669"/>
    <property type="project" value="InterPro"/>
</dbReference>
<dbReference type="GO" id="GO:0051484">
    <property type="term" value="P:isopentenyl diphosphate biosynthetic process, methylerythritol 4-phosphate pathway involved in terpenoid biosynthetic process"/>
    <property type="evidence" value="ECO:0007669"/>
    <property type="project" value="TreeGrafter"/>
</dbReference>
<dbReference type="FunFam" id="3.40.50.720:FF:000045">
    <property type="entry name" value="1-deoxy-D-xylulose 5-phosphate reductoisomerase"/>
    <property type="match status" value="1"/>
</dbReference>
<dbReference type="Gene3D" id="1.10.1740.10">
    <property type="match status" value="1"/>
</dbReference>
<dbReference type="Gene3D" id="3.40.50.720">
    <property type="entry name" value="NAD(P)-binding Rossmann-like Domain"/>
    <property type="match status" value="1"/>
</dbReference>
<dbReference type="HAMAP" id="MF_00183">
    <property type="entry name" value="DXP_reductoisom"/>
    <property type="match status" value="1"/>
</dbReference>
<dbReference type="InterPro" id="IPR003821">
    <property type="entry name" value="DXP_reductoisomerase"/>
</dbReference>
<dbReference type="InterPro" id="IPR013644">
    <property type="entry name" value="DXP_reductoisomerase_C"/>
</dbReference>
<dbReference type="InterPro" id="IPR013512">
    <property type="entry name" value="DXP_reductoisomerase_N"/>
</dbReference>
<dbReference type="InterPro" id="IPR026877">
    <property type="entry name" value="DXPR_C"/>
</dbReference>
<dbReference type="InterPro" id="IPR036169">
    <property type="entry name" value="DXPR_C_sf"/>
</dbReference>
<dbReference type="InterPro" id="IPR036291">
    <property type="entry name" value="NAD(P)-bd_dom_sf"/>
</dbReference>
<dbReference type="NCBIfam" id="TIGR00243">
    <property type="entry name" value="Dxr"/>
    <property type="match status" value="1"/>
</dbReference>
<dbReference type="NCBIfam" id="NF003938">
    <property type="entry name" value="PRK05447.1-1"/>
    <property type="match status" value="1"/>
</dbReference>
<dbReference type="NCBIfam" id="NF009114">
    <property type="entry name" value="PRK12464.1"/>
    <property type="match status" value="1"/>
</dbReference>
<dbReference type="PANTHER" id="PTHR30525">
    <property type="entry name" value="1-DEOXY-D-XYLULOSE 5-PHOSPHATE REDUCTOISOMERASE"/>
    <property type="match status" value="1"/>
</dbReference>
<dbReference type="PANTHER" id="PTHR30525:SF0">
    <property type="entry name" value="1-DEOXY-D-XYLULOSE 5-PHOSPHATE REDUCTOISOMERASE, CHLOROPLASTIC"/>
    <property type="match status" value="1"/>
</dbReference>
<dbReference type="Pfam" id="PF08436">
    <property type="entry name" value="DXP_redisom_C"/>
    <property type="match status" value="1"/>
</dbReference>
<dbReference type="Pfam" id="PF02670">
    <property type="entry name" value="DXP_reductoisom"/>
    <property type="match status" value="1"/>
</dbReference>
<dbReference type="Pfam" id="PF13288">
    <property type="entry name" value="DXPR_C"/>
    <property type="match status" value="1"/>
</dbReference>
<dbReference type="PIRSF" id="PIRSF006205">
    <property type="entry name" value="Dxp_reductismrs"/>
    <property type="match status" value="1"/>
</dbReference>
<dbReference type="SUPFAM" id="SSF69055">
    <property type="entry name" value="1-deoxy-D-xylulose-5-phosphate reductoisomerase, C-terminal domain"/>
    <property type="match status" value="1"/>
</dbReference>
<dbReference type="SUPFAM" id="SSF55347">
    <property type="entry name" value="Glyceraldehyde-3-phosphate dehydrogenase-like, C-terminal domain"/>
    <property type="match status" value="1"/>
</dbReference>
<dbReference type="SUPFAM" id="SSF51735">
    <property type="entry name" value="NAD(P)-binding Rossmann-fold domains"/>
    <property type="match status" value="1"/>
</dbReference>
<feature type="chain" id="PRO_1000098481" description="1-deoxy-D-xylulose 5-phosphate reductoisomerase">
    <location>
        <begin position="1"/>
        <end position="398"/>
    </location>
</feature>
<feature type="binding site" evidence="1">
    <location>
        <position position="13"/>
    </location>
    <ligand>
        <name>NADPH</name>
        <dbReference type="ChEBI" id="CHEBI:57783"/>
    </ligand>
</feature>
<feature type="binding site" evidence="1">
    <location>
        <position position="14"/>
    </location>
    <ligand>
        <name>NADPH</name>
        <dbReference type="ChEBI" id="CHEBI:57783"/>
    </ligand>
</feature>
<feature type="binding site" evidence="1">
    <location>
        <position position="15"/>
    </location>
    <ligand>
        <name>NADPH</name>
        <dbReference type="ChEBI" id="CHEBI:57783"/>
    </ligand>
</feature>
<feature type="binding site" evidence="1">
    <location>
        <position position="16"/>
    </location>
    <ligand>
        <name>NADPH</name>
        <dbReference type="ChEBI" id="CHEBI:57783"/>
    </ligand>
</feature>
<feature type="binding site" evidence="1">
    <location>
        <position position="40"/>
    </location>
    <ligand>
        <name>NADPH</name>
        <dbReference type="ChEBI" id="CHEBI:57783"/>
    </ligand>
</feature>
<feature type="binding site" evidence="1">
    <location>
        <position position="127"/>
    </location>
    <ligand>
        <name>NADPH</name>
        <dbReference type="ChEBI" id="CHEBI:57783"/>
    </ligand>
</feature>
<feature type="binding site" evidence="1">
    <location>
        <position position="128"/>
    </location>
    <ligand>
        <name>1-deoxy-D-xylulose 5-phosphate</name>
        <dbReference type="ChEBI" id="CHEBI:57792"/>
    </ligand>
</feature>
<feature type="binding site" evidence="1">
    <location>
        <position position="129"/>
    </location>
    <ligand>
        <name>NADPH</name>
        <dbReference type="ChEBI" id="CHEBI:57783"/>
    </ligand>
</feature>
<feature type="binding site" evidence="1">
    <location>
        <position position="153"/>
    </location>
    <ligand>
        <name>Mn(2+)</name>
        <dbReference type="ChEBI" id="CHEBI:29035"/>
    </ligand>
</feature>
<feature type="binding site" evidence="1">
    <location>
        <position position="154"/>
    </location>
    <ligand>
        <name>1-deoxy-D-xylulose 5-phosphate</name>
        <dbReference type="ChEBI" id="CHEBI:57792"/>
    </ligand>
</feature>
<feature type="binding site" evidence="1">
    <location>
        <position position="155"/>
    </location>
    <ligand>
        <name>1-deoxy-D-xylulose 5-phosphate</name>
        <dbReference type="ChEBI" id="CHEBI:57792"/>
    </ligand>
</feature>
<feature type="binding site" evidence="1">
    <location>
        <position position="155"/>
    </location>
    <ligand>
        <name>Mn(2+)</name>
        <dbReference type="ChEBI" id="CHEBI:29035"/>
    </ligand>
</feature>
<feature type="binding site" evidence="1">
    <location>
        <position position="188"/>
    </location>
    <ligand>
        <name>1-deoxy-D-xylulose 5-phosphate</name>
        <dbReference type="ChEBI" id="CHEBI:57792"/>
    </ligand>
</feature>
<feature type="binding site" evidence="1">
    <location>
        <position position="211"/>
    </location>
    <ligand>
        <name>1-deoxy-D-xylulose 5-phosphate</name>
        <dbReference type="ChEBI" id="CHEBI:57792"/>
    </ligand>
</feature>
<feature type="binding site" evidence="1">
    <location>
        <position position="217"/>
    </location>
    <ligand>
        <name>NADPH</name>
        <dbReference type="ChEBI" id="CHEBI:57783"/>
    </ligand>
</feature>
<feature type="binding site" evidence="1">
    <location>
        <position position="224"/>
    </location>
    <ligand>
        <name>1-deoxy-D-xylulose 5-phosphate</name>
        <dbReference type="ChEBI" id="CHEBI:57792"/>
    </ligand>
</feature>
<feature type="binding site" evidence="1">
    <location>
        <position position="229"/>
    </location>
    <ligand>
        <name>1-deoxy-D-xylulose 5-phosphate</name>
        <dbReference type="ChEBI" id="CHEBI:57792"/>
    </ligand>
</feature>
<feature type="binding site" evidence="1">
    <location>
        <position position="230"/>
    </location>
    <ligand>
        <name>1-deoxy-D-xylulose 5-phosphate</name>
        <dbReference type="ChEBI" id="CHEBI:57792"/>
    </ligand>
</feature>
<feature type="binding site" evidence="1">
    <location>
        <position position="233"/>
    </location>
    <ligand>
        <name>1-deoxy-D-xylulose 5-phosphate</name>
        <dbReference type="ChEBI" id="CHEBI:57792"/>
    </ligand>
</feature>
<feature type="binding site" evidence="1">
    <location>
        <position position="233"/>
    </location>
    <ligand>
        <name>Mn(2+)</name>
        <dbReference type="ChEBI" id="CHEBI:29035"/>
    </ligand>
</feature>
<name>DXR_CELJU</name>
<sequence>MGRPESITVLGATGSIGVSTLDVISRHPERYQVYALTAERRWQLLATQCLEHQPRYAVIRDADSAGLLEQELRKQGCLTEVLYGADALASVAGASEVDMVMAAIVGAAGLLPTLAAVKAGKKVLLANKEVLVMAGGLFTQAVAEHGAQLLPIDSEHNAIFQCLPNHRPDYLQQGLISSGVRKILLTASGGPFRNTPIHELARVTPEQACAHPNWSMGQKISVDSASMMNKGLELIEACWLFNTSPRQVEVVIHPQSVIHSMVEYIDGSVLAQLGNPDMRTPIAHALAWPERIESGVASLDLIMTARLDFSAPDVQRFPCLRLAQEAVVSGGNAPVLLNAANEIAVAAFLERRLGFDQIPRLISSVMDAIPFSEPETLELVQAADAEARAVAMQLLARW</sequence>
<proteinExistence type="inferred from homology"/>
<protein>
    <recommendedName>
        <fullName evidence="1">1-deoxy-D-xylulose 5-phosphate reductoisomerase</fullName>
        <shortName evidence="1">DXP reductoisomerase</shortName>
        <ecNumber evidence="1">1.1.1.267</ecNumber>
    </recommendedName>
    <alternativeName>
        <fullName evidence="1">1-deoxyxylulose-5-phosphate reductoisomerase</fullName>
    </alternativeName>
    <alternativeName>
        <fullName evidence="1">2-C-methyl-D-erythritol 4-phosphate synthase</fullName>
    </alternativeName>
</protein>
<evidence type="ECO:0000255" key="1">
    <source>
        <dbReference type="HAMAP-Rule" id="MF_00183"/>
    </source>
</evidence>
<accession>B3PBQ4</accession>
<organism>
    <name type="scientific">Cellvibrio japonicus (strain Ueda107)</name>
    <name type="common">Pseudomonas fluorescens subsp. cellulosa</name>
    <dbReference type="NCBI Taxonomy" id="498211"/>
    <lineage>
        <taxon>Bacteria</taxon>
        <taxon>Pseudomonadati</taxon>
        <taxon>Pseudomonadota</taxon>
        <taxon>Gammaproteobacteria</taxon>
        <taxon>Cellvibrionales</taxon>
        <taxon>Cellvibrionaceae</taxon>
        <taxon>Cellvibrio</taxon>
    </lineage>
</organism>
<keyword id="KW-0414">Isoprene biosynthesis</keyword>
<keyword id="KW-0464">Manganese</keyword>
<keyword id="KW-0479">Metal-binding</keyword>
<keyword id="KW-0521">NADP</keyword>
<keyword id="KW-0560">Oxidoreductase</keyword>
<keyword id="KW-1185">Reference proteome</keyword>
<comment type="function">
    <text evidence="1">Catalyzes the NADPH-dependent rearrangement and reduction of 1-deoxy-D-xylulose-5-phosphate (DXP) to 2-C-methyl-D-erythritol 4-phosphate (MEP).</text>
</comment>
<comment type="catalytic activity">
    <reaction evidence="1">
        <text>2-C-methyl-D-erythritol 4-phosphate + NADP(+) = 1-deoxy-D-xylulose 5-phosphate + NADPH + H(+)</text>
        <dbReference type="Rhea" id="RHEA:13717"/>
        <dbReference type="ChEBI" id="CHEBI:15378"/>
        <dbReference type="ChEBI" id="CHEBI:57783"/>
        <dbReference type="ChEBI" id="CHEBI:57792"/>
        <dbReference type="ChEBI" id="CHEBI:58262"/>
        <dbReference type="ChEBI" id="CHEBI:58349"/>
        <dbReference type="EC" id="1.1.1.267"/>
    </reaction>
    <physiologicalReaction direction="right-to-left" evidence="1">
        <dbReference type="Rhea" id="RHEA:13719"/>
    </physiologicalReaction>
</comment>
<comment type="cofactor">
    <cofactor evidence="1">
        <name>Mg(2+)</name>
        <dbReference type="ChEBI" id="CHEBI:18420"/>
    </cofactor>
    <cofactor evidence="1">
        <name>Mn(2+)</name>
        <dbReference type="ChEBI" id="CHEBI:29035"/>
    </cofactor>
</comment>
<comment type="pathway">
    <text evidence="1">Isoprenoid biosynthesis; isopentenyl diphosphate biosynthesis via DXP pathway; isopentenyl diphosphate from 1-deoxy-D-xylulose 5-phosphate: step 1/6.</text>
</comment>
<comment type="similarity">
    <text evidence="1">Belongs to the DXR family.</text>
</comment>
<reference key="1">
    <citation type="journal article" date="2008" name="J. Bacteriol.">
        <title>Insights into plant cell wall degradation from the genome sequence of the soil bacterium Cellvibrio japonicus.</title>
        <authorList>
            <person name="DeBoy R.T."/>
            <person name="Mongodin E.F."/>
            <person name="Fouts D.E."/>
            <person name="Tailford L.E."/>
            <person name="Khouri H."/>
            <person name="Emerson J.B."/>
            <person name="Mohamoud Y."/>
            <person name="Watkins K."/>
            <person name="Henrissat B."/>
            <person name="Gilbert H.J."/>
            <person name="Nelson K.E."/>
        </authorList>
    </citation>
    <scope>NUCLEOTIDE SEQUENCE [LARGE SCALE GENOMIC DNA]</scope>
    <source>
        <strain>Ueda107</strain>
    </source>
</reference>